<organism>
    <name type="scientific">Escherichia coli O7:K1 (strain IAI39 / ExPEC)</name>
    <dbReference type="NCBI Taxonomy" id="585057"/>
    <lineage>
        <taxon>Bacteria</taxon>
        <taxon>Pseudomonadati</taxon>
        <taxon>Pseudomonadota</taxon>
        <taxon>Gammaproteobacteria</taxon>
        <taxon>Enterobacterales</taxon>
        <taxon>Enterobacteriaceae</taxon>
        <taxon>Escherichia</taxon>
    </lineage>
</organism>
<feature type="chain" id="PRO_1000131590" description="Uronate isomerase">
    <location>
        <begin position="1"/>
        <end position="470"/>
    </location>
</feature>
<accession>B7NJV5</accession>
<sequence length="470" mass="53987">MTPFMTEDFLLDTEFARRLYHDYAKDQPIFDYHCHLPPQQIAEDYRFKNLYDIWLKGDHYKWRAMRTNGVAERLCTGDASDREKFDAWAATVPHTIGNPLYHWTHLELRRPFGITGKLLSPSTADEIWNECNELLAQDNFSARGIMQQMNVKMVGTTDDPIDSLEHHAEIAKDGSFTIKVLPSWRPDKAFNIEQATFNDYMAKLGEVSDTDIRRFADLQTALTKRLDHFAAHGCKVSDHALDVVMFAEANEAELDSILARRLAGETLSEHEVAQFKTAVLVFLGAEYARRGWVQQYHIGALRNNNLRQFKLLGPDVGFDSINDRPMAEELSKLLSKQNEENLLPKTILYCLNPRDNEVLGTMIGNFQGEGMPGKMQFGSGWWFNDQKDGMERQMTQLAQLGLLSRFVGMLTDSRSFLSYTRHEYFRRILCQMIGRWVEAGEAPADINLLGEMVKNICFNNARDYFAIELN</sequence>
<keyword id="KW-0413">Isomerase</keyword>
<gene>
    <name evidence="1" type="primary">uxaC</name>
    <name type="ordered locus">ECIAI39_3589</name>
</gene>
<name>UXAC_ECO7I</name>
<evidence type="ECO:0000255" key="1">
    <source>
        <dbReference type="HAMAP-Rule" id="MF_00675"/>
    </source>
</evidence>
<dbReference type="EC" id="5.3.1.12" evidence="1"/>
<dbReference type="EMBL" id="CU928164">
    <property type="protein sequence ID" value="CAR19705.1"/>
    <property type="molecule type" value="Genomic_DNA"/>
</dbReference>
<dbReference type="RefSeq" id="WP_000187442.1">
    <property type="nucleotide sequence ID" value="NC_011750.1"/>
</dbReference>
<dbReference type="RefSeq" id="YP_002409492.1">
    <property type="nucleotide sequence ID" value="NC_011750.1"/>
</dbReference>
<dbReference type="SMR" id="B7NJV5"/>
<dbReference type="STRING" id="585057.ECIAI39_3589"/>
<dbReference type="GeneID" id="93778895"/>
<dbReference type="KEGG" id="ect:ECIAI39_3589"/>
<dbReference type="PATRIC" id="fig|585057.6.peg.3720"/>
<dbReference type="HOGENOM" id="CLU_044465_1_0_6"/>
<dbReference type="UniPathway" id="UPA00246"/>
<dbReference type="Proteomes" id="UP000000749">
    <property type="component" value="Chromosome"/>
</dbReference>
<dbReference type="GO" id="GO:0008880">
    <property type="term" value="F:glucuronate isomerase activity"/>
    <property type="evidence" value="ECO:0007669"/>
    <property type="project" value="UniProtKB-UniRule"/>
</dbReference>
<dbReference type="GO" id="GO:0019698">
    <property type="term" value="P:D-galacturonate catabolic process"/>
    <property type="evidence" value="ECO:0007669"/>
    <property type="project" value="TreeGrafter"/>
</dbReference>
<dbReference type="GO" id="GO:0042840">
    <property type="term" value="P:D-glucuronate catabolic process"/>
    <property type="evidence" value="ECO:0007669"/>
    <property type="project" value="TreeGrafter"/>
</dbReference>
<dbReference type="FunFam" id="1.10.2020.10:FF:000001">
    <property type="entry name" value="Uronate isomerase"/>
    <property type="match status" value="1"/>
</dbReference>
<dbReference type="Gene3D" id="3.20.20.140">
    <property type="entry name" value="Metal-dependent hydrolases"/>
    <property type="match status" value="1"/>
</dbReference>
<dbReference type="Gene3D" id="1.10.2020.10">
    <property type="entry name" value="uronate isomerase, domain 2, chain A"/>
    <property type="match status" value="1"/>
</dbReference>
<dbReference type="HAMAP" id="MF_00675">
    <property type="entry name" value="UxaC"/>
    <property type="match status" value="1"/>
</dbReference>
<dbReference type="InterPro" id="IPR032466">
    <property type="entry name" value="Metal_Hydrolase"/>
</dbReference>
<dbReference type="InterPro" id="IPR003766">
    <property type="entry name" value="Uronate_isomerase"/>
</dbReference>
<dbReference type="NCBIfam" id="NF002794">
    <property type="entry name" value="PRK02925.1"/>
    <property type="match status" value="1"/>
</dbReference>
<dbReference type="PANTHER" id="PTHR30068">
    <property type="entry name" value="URONATE ISOMERASE"/>
    <property type="match status" value="1"/>
</dbReference>
<dbReference type="PANTHER" id="PTHR30068:SF4">
    <property type="entry name" value="URONATE ISOMERASE"/>
    <property type="match status" value="1"/>
</dbReference>
<dbReference type="Pfam" id="PF02614">
    <property type="entry name" value="UxaC"/>
    <property type="match status" value="1"/>
</dbReference>
<dbReference type="SUPFAM" id="SSF51556">
    <property type="entry name" value="Metallo-dependent hydrolases"/>
    <property type="match status" value="1"/>
</dbReference>
<protein>
    <recommendedName>
        <fullName evidence="1">Uronate isomerase</fullName>
        <ecNumber evidence="1">5.3.1.12</ecNumber>
    </recommendedName>
    <alternativeName>
        <fullName evidence="1">Glucuronate isomerase</fullName>
    </alternativeName>
    <alternativeName>
        <fullName evidence="1">Uronic isomerase</fullName>
    </alternativeName>
</protein>
<reference key="1">
    <citation type="journal article" date="2009" name="PLoS Genet.">
        <title>Organised genome dynamics in the Escherichia coli species results in highly diverse adaptive paths.</title>
        <authorList>
            <person name="Touchon M."/>
            <person name="Hoede C."/>
            <person name="Tenaillon O."/>
            <person name="Barbe V."/>
            <person name="Baeriswyl S."/>
            <person name="Bidet P."/>
            <person name="Bingen E."/>
            <person name="Bonacorsi S."/>
            <person name="Bouchier C."/>
            <person name="Bouvet O."/>
            <person name="Calteau A."/>
            <person name="Chiapello H."/>
            <person name="Clermont O."/>
            <person name="Cruveiller S."/>
            <person name="Danchin A."/>
            <person name="Diard M."/>
            <person name="Dossat C."/>
            <person name="Karoui M.E."/>
            <person name="Frapy E."/>
            <person name="Garry L."/>
            <person name="Ghigo J.M."/>
            <person name="Gilles A.M."/>
            <person name="Johnson J."/>
            <person name="Le Bouguenec C."/>
            <person name="Lescat M."/>
            <person name="Mangenot S."/>
            <person name="Martinez-Jehanne V."/>
            <person name="Matic I."/>
            <person name="Nassif X."/>
            <person name="Oztas S."/>
            <person name="Petit M.A."/>
            <person name="Pichon C."/>
            <person name="Rouy Z."/>
            <person name="Ruf C.S."/>
            <person name="Schneider D."/>
            <person name="Tourret J."/>
            <person name="Vacherie B."/>
            <person name="Vallenet D."/>
            <person name="Medigue C."/>
            <person name="Rocha E.P.C."/>
            <person name="Denamur E."/>
        </authorList>
    </citation>
    <scope>NUCLEOTIDE SEQUENCE [LARGE SCALE GENOMIC DNA]</scope>
    <source>
        <strain>IAI39 / ExPEC</strain>
    </source>
</reference>
<proteinExistence type="inferred from homology"/>
<comment type="catalytic activity">
    <reaction evidence="1">
        <text>D-glucuronate = D-fructuronate</text>
        <dbReference type="Rhea" id="RHEA:13049"/>
        <dbReference type="ChEBI" id="CHEBI:58720"/>
        <dbReference type="ChEBI" id="CHEBI:59863"/>
        <dbReference type="EC" id="5.3.1.12"/>
    </reaction>
</comment>
<comment type="catalytic activity">
    <reaction evidence="1">
        <text>aldehydo-D-galacturonate = keto-D-tagaturonate</text>
        <dbReference type="Rhea" id="RHEA:27702"/>
        <dbReference type="ChEBI" id="CHEBI:12952"/>
        <dbReference type="ChEBI" id="CHEBI:17886"/>
        <dbReference type="EC" id="5.3.1.12"/>
    </reaction>
</comment>
<comment type="pathway">
    <text evidence="1">Carbohydrate metabolism; pentose and glucuronate interconversion.</text>
</comment>
<comment type="similarity">
    <text evidence="1">Belongs to the metallo-dependent hydrolases superfamily. Uronate isomerase family.</text>
</comment>